<feature type="chain" id="PRO_0000224675" description="UDP-N-acetylenolpyruvoylglucosamine reductase">
    <location>
        <begin position="1"/>
        <end position="291"/>
    </location>
</feature>
<feature type="domain" description="FAD-binding PCMH-type" evidence="1">
    <location>
        <begin position="22"/>
        <end position="187"/>
    </location>
</feature>
<feature type="active site" evidence="1">
    <location>
        <position position="166"/>
    </location>
</feature>
<feature type="active site" description="Proton donor" evidence="1">
    <location>
        <position position="214"/>
    </location>
</feature>
<feature type="active site" evidence="1">
    <location>
        <position position="283"/>
    </location>
</feature>
<dbReference type="EC" id="1.3.1.98" evidence="1"/>
<dbReference type="EMBL" id="CP000051">
    <property type="protein sequence ID" value="AAX51114.1"/>
    <property type="molecule type" value="Genomic_DNA"/>
</dbReference>
<dbReference type="RefSeq" id="WP_009872217.1">
    <property type="nucleotide sequence ID" value="NC_007429.1"/>
</dbReference>
<dbReference type="SMR" id="Q3KKK8"/>
<dbReference type="KEGG" id="cta:CTA_0906"/>
<dbReference type="HOGENOM" id="CLU_035304_1_1_0"/>
<dbReference type="UniPathway" id="UPA00219"/>
<dbReference type="Proteomes" id="UP000002532">
    <property type="component" value="Chromosome"/>
</dbReference>
<dbReference type="GO" id="GO:0005829">
    <property type="term" value="C:cytosol"/>
    <property type="evidence" value="ECO:0007669"/>
    <property type="project" value="TreeGrafter"/>
</dbReference>
<dbReference type="GO" id="GO:0071949">
    <property type="term" value="F:FAD binding"/>
    <property type="evidence" value="ECO:0007669"/>
    <property type="project" value="InterPro"/>
</dbReference>
<dbReference type="GO" id="GO:0008762">
    <property type="term" value="F:UDP-N-acetylmuramate dehydrogenase activity"/>
    <property type="evidence" value="ECO:0007669"/>
    <property type="project" value="UniProtKB-UniRule"/>
</dbReference>
<dbReference type="GO" id="GO:0051301">
    <property type="term" value="P:cell division"/>
    <property type="evidence" value="ECO:0007669"/>
    <property type="project" value="UniProtKB-KW"/>
</dbReference>
<dbReference type="GO" id="GO:0071555">
    <property type="term" value="P:cell wall organization"/>
    <property type="evidence" value="ECO:0007669"/>
    <property type="project" value="UniProtKB-KW"/>
</dbReference>
<dbReference type="GO" id="GO:0009252">
    <property type="term" value="P:peptidoglycan biosynthetic process"/>
    <property type="evidence" value="ECO:0007669"/>
    <property type="project" value="UniProtKB-UniRule"/>
</dbReference>
<dbReference type="GO" id="GO:0008360">
    <property type="term" value="P:regulation of cell shape"/>
    <property type="evidence" value="ECO:0007669"/>
    <property type="project" value="UniProtKB-KW"/>
</dbReference>
<dbReference type="Gene3D" id="3.30.465.10">
    <property type="match status" value="1"/>
</dbReference>
<dbReference type="Gene3D" id="3.90.78.10">
    <property type="entry name" value="UDP-N-acetylenolpyruvoylglucosamine reductase, C-terminal domain"/>
    <property type="match status" value="1"/>
</dbReference>
<dbReference type="Gene3D" id="3.30.43.10">
    <property type="entry name" value="Uridine Diphospho-n-acetylenolpyruvylglucosamine Reductase, domain 2"/>
    <property type="match status" value="1"/>
</dbReference>
<dbReference type="HAMAP" id="MF_00037">
    <property type="entry name" value="MurB"/>
    <property type="match status" value="1"/>
</dbReference>
<dbReference type="InterPro" id="IPR016166">
    <property type="entry name" value="FAD-bd_PCMH"/>
</dbReference>
<dbReference type="InterPro" id="IPR036318">
    <property type="entry name" value="FAD-bd_PCMH-like_sf"/>
</dbReference>
<dbReference type="InterPro" id="IPR016167">
    <property type="entry name" value="FAD-bd_PCMH_sub1"/>
</dbReference>
<dbReference type="InterPro" id="IPR016169">
    <property type="entry name" value="FAD-bd_PCMH_sub2"/>
</dbReference>
<dbReference type="InterPro" id="IPR003170">
    <property type="entry name" value="MurB"/>
</dbReference>
<dbReference type="InterPro" id="IPR011601">
    <property type="entry name" value="MurB_C"/>
</dbReference>
<dbReference type="InterPro" id="IPR036635">
    <property type="entry name" value="MurB_C_sf"/>
</dbReference>
<dbReference type="InterPro" id="IPR006094">
    <property type="entry name" value="Oxid_FAD_bind_N"/>
</dbReference>
<dbReference type="NCBIfam" id="TIGR00179">
    <property type="entry name" value="murB"/>
    <property type="match status" value="1"/>
</dbReference>
<dbReference type="NCBIfam" id="NF010480">
    <property type="entry name" value="PRK13905.1"/>
    <property type="match status" value="1"/>
</dbReference>
<dbReference type="PANTHER" id="PTHR21071">
    <property type="entry name" value="UDP-N-ACETYLENOLPYRUVOYLGLUCOSAMINE REDUCTASE"/>
    <property type="match status" value="1"/>
</dbReference>
<dbReference type="PANTHER" id="PTHR21071:SF4">
    <property type="entry name" value="UDP-N-ACETYLENOLPYRUVOYLGLUCOSAMINE REDUCTASE"/>
    <property type="match status" value="1"/>
</dbReference>
<dbReference type="Pfam" id="PF01565">
    <property type="entry name" value="FAD_binding_4"/>
    <property type="match status" value="1"/>
</dbReference>
<dbReference type="Pfam" id="PF02873">
    <property type="entry name" value="MurB_C"/>
    <property type="match status" value="1"/>
</dbReference>
<dbReference type="SUPFAM" id="SSF56176">
    <property type="entry name" value="FAD-binding/transporter-associated domain-like"/>
    <property type="match status" value="1"/>
</dbReference>
<dbReference type="SUPFAM" id="SSF56194">
    <property type="entry name" value="Uridine diphospho-N-Acetylenolpyruvylglucosamine reductase, MurB, C-terminal domain"/>
    <property type="match status" value="1"/>
</dbReference>
<dbReference type="PROSITE" id="PS51387">
    <property type="entry name" value="FAD_PCMH"/>
    <property type="match status" value="1"/>
</dbReference>
<protein>
    <recommendedName>
        <fullName evidence="1">UDP-N-acetylenolpyruvoylglucosamine reductase</fullName>
        <ecNumber evidence="1">1.3.1.98</ecNumber>
    </recommendedName>
    <alternativeName>
        <fullName evidence="1">UDP-N-acetylmuramate dehydrogenase</fullName>
    </alternativeName>
</protein>
<keyword id="KW-0131">Cell cycle</keyword>
<keyword id="KW-0132">Cell division</keyword>
<keyword id="KW-0133">Cell shape</keyword>
<keyword id="KW-0961">Cell wall biogenesis/degradation</keyword>
<keyword id="KW-0963">Cytoplasm</keyword>
<keyword id="KW-0274">FAD</keyword>
<keyword id="KW-0285">Flavoprotein</keyword>
<keyword id="KW-0521">NADP</keyword>
<keyword id="KW-0560">Oxidoreductase</keyword>
<keyword id="KW-0573">Peptidoglycan synthesis</keyword>
<comment type="function">
    <text evidence="1">Cell wall formation.</text>
</comment>
<comment type="catalytic activity">
    <reaction evidence="1">
        <text>UDP-N-acetyl-alpha-D-muramate + NADP(+) = UDP-N-acetyl-3-O-(1-carboxyvinyl)-alpha-D-glucosamine + NADPH + H(+)</text>
        <dbReference type="Rhea" id="RHEA:12248"/>
        <dbReference type="ChEBI" id="CHEBI:15378"/>
        <dbReference type="ChEBI" id="CHEBI:57783"/>
        <dbReference type="ChEBI" id="CHEBI:58349"/>
        <dbReference type="ChEBI" id="CHEBI:68483"/>
        <dbReference type="ChEBI" id="CHEBI:70757"/>
        <dbReference type="EC" id="1.3.1.98"/>
    </reaction>
</comment>
<comment type="cofactor">
    <cofactor evidence="1">
        <name>FAD</name>
        <dbReference type="ChEBI" id="CHEBI:57692"/>
    </cofactor>
</comment>
<comment type="pathway">
    <text evidence="1">Cell wall biogenesis; peptidoglycan biosynthesis.</text>
</comment>
<comment type="subcellular location">
    <subcellularLocation>
        <location evidence="1">Cytoplasm</location>
    </subcellularLocation>
</comment>
<comment type="similarity">
    <text evidence="1">Belongs to the MurB family.</text>
</comment>
<proteinExistence type="inferred from homology"/>
<reference key="1">
    <citation type="journal article" date="2005" name="Infect. Immun.">
        <title>Comparative genomic analysis of Chlamydia trachomatis oculotropic and genitotropic strains.</title>
        <authorList>
            <person name="Carlson J.H."/>
            <person name="Porcella S.F."/>
            <person name="McClarty G."/>
            <person name="Caldwell H.D."/>
        </authorList>
    </citation>
    <scope>NUCLEOTIDE SEQUENCE [LARGE SCALE GENOMIC DNA]</scope>
    <source>
        <strain>ATCC VR-571B / DSM 19440 / HAR-13</strain>
    </source>
</reference>
<organism>
    <name type="scientific">Chlamydia trachomatis serovar A (strain ATCC VR-571B / DSM 19440 / HAR-13)</name>
    <dbReference type="NCBI Taxonomy" id="315277"/>
    <lineage>
        <taxon>Bacteria</taxon>
        <taxon>Pseudomonadati</taxon>
        <taxon>Chlamydiota</taxon>
        <taxon>Chlamydiia</taxon>
        <taxon>Chlamydiales</taxon>
        <taxon>Chlamydiaceae</taxon>
        <taxon>Chlamydia/Chlamydophila group</taxon>
        <taxon>Chlamydia</taxon>
    </lineage>
</organism>
<gene>
    <name evidence="1" type="primary">murB</name>
    <name type="ordered locus">CTA_0906</name>
</gene>
<accession>Q3KKK8</accession>
<evidence type="ECO:0000255" key="1">
    <source>
        <dbReference type="HAMAP-Rule" id="MF_00037"/>
    </source>
</evidence>
<name>MURB_CHLTA</name>
<sequence>MTDSFPFSVQESVPLSRFSTFRIGGPARYFKELTSVSEALTVFSYLHTHPLPYIIIGKGSNCLFDDQGFDGLVLYNNIQGQEFLSDTQIKVLSGSSFALLGKRLSSQGFSGLEFAVGIPGTVGGAVFMNAGTTLANTASSLINVEIIDHSGILLSIPREKLLFSYRTSPFQKKPAFIASATFQLTKDPQAAKRAKALIEERILKQPYEYPSAGCIFRNPEGLSAGALIDRAGLKGLKIGGGQISEKHGNFIINTGNACTADILELIEIIQKTLKKQGISLHKEVRIIPFRL</sequence>